<keyword id="KW-0963">Cytoplasm</keyword>
<keyword id="KW-0238">DNA-binding</keyword>
<keyword id="KW-0677">Repeat</keyword>
<keyword id="KW-0804">Transcription</keyword>
<keyword id="KW-0805">Transcription regulation</keyword>
<sequence>MFQGASALTLDAKGRMSIPSRYRDALQTQAEGRVTITKHPDGCLLLFPRPEWEIFRDKVDKLPMNATWWKRIFLGNAMDVEMDGAGRVLVSPELRTAGGLEKEVTLLGMGRHFELWDAQTYAAKEQAAMAEGMPDALKDFTF</sequence>
<name>MRAZ_PARPJ</name>
<gene>
    <name evidence="1" type="primary">mraZ</name>
    <name type="ordered locus">Bphyt_3479</name>
</gene>
<feature type="chain" id="PRO_1000134776" description="Transcriptional regulator MraZ">
    <location>
        <begin position="1"/>
        <end position="142"/>
    </location>
</feature>
<feature type="domain" description="SpoVT-AbrB 1" evidence="2">
    <location>
        <begin position="5"/>
        <end position="51"/>
    </location>
</feature>
<feature type="domain" description="SpoVT-AbrB 2" evidence="2">
    <location>
        <begin position="77"/>
        <end position="120"/>
    </location>
</feature>
<proteinExistence type="inferred from homology"/>
<organism>
    <name type="scientific">Paraburkholderia phytofirmans (strain DSM 17436 / LMG 22146 / PsJN)</name>
    <name type="common">Burkholderia phytofirmans</name>
    <dbReference type="NCBI Taxonomy" id="398527"/>
    <lineage>
        <taxon>Bacteria</taxon>
        <taxon>Pseudomonadati</taxon>
        <taxon>Pseudomonadota</taxon>
        <taxon>Betaproteobacteria</taxon>
        <taxon>Burkholderiales</taxon>
        <taxon>Burkholderiaceae</taxon>
        <taxon>Paraburkholderia</taxon>
    </lineage>
</organism>
<reference key="1">
    <citation type="journal article" date="2011" name="J. Bacteriol.">
        <title>Complete genome sequence of the plant growth-promoting endophyte Burkholderia phytofirmans strain PsJN.</title>
        <authorList>
            <person name="Weilharter A."/>
            <person name="Mitter B."/>
            <person name="Shin M.V."/>
            <person name="Chain P.S."/>
            <person name="Nowak J."/>
            <person name="Sessitsch A."/>
        </authorList>
    </citation>
    <scope>NUCLEOTIDE SEQUENCE [LARGE SCALE GENOMIC DNA]</scope>
    <source>
        <strain>DSM 17436 / LMG 22146 / PsJN</strain>
    </source>
</reference>
<evidence type="ECO:0000255" key="1">
    <source>
        <dbReference type="HAMAP-Rule" id="MF_01008"/>
    </source>
</evidence>
<evidence type="ECO:0000255" key="2">
    <source>
        <dbReference type="PROSITE-ProRule" id="PRU01076"/>
    </source>
</evidence>
<protein>
    <recommendedName>
        <fullName>Transcriptional regulator MraZ</fullName>
    </recommendedName>
</protein>
<comment type="subunit">
    <text evidence="1">Forms oligomers.</text>
</comment>
<comment type="subcellular location">
    <subcellularLocation>
        <location evidence="1">Cytoplasm</location>
        <location evidence="1">Nucleoid</location>
    </subcellularLocation>
</comment>
<comment type="similarity">
    <text evidence="1">Belongs to the MraZ family.</text>
</comment>
<dbReference type="EMBL" id="CP001052">
    <property type="protein sequence ID" value="ACD17869.1"/>
    <property type="molecule type" value="Genomic_DNA"/>
</dbReference>
<dbReference type="RefSeq" id="WP_012434430.1">
    <property type="nucleotide sequence ID" value="NC_010681.1"/>
</dbReference>
<dbReference type="SMR" id="B2SYY4"/>
<dbReference type="STRING" id="398527.Bphyt_3479"/>
<dbReference type="GeneID" id="97303655"/>
<dbReference type="KEGG" id="bpy:Bphyt_3479"/>
<dbReference type="eggNOG" id="COG2001">
    <property type="taxonomic scope" value="Bacteria"/>
</dbReference>
<dbReference type="HOGENOM" id="CLU_107907_2_1_4"/>
<dbReference type="OrthoDB" id="9807753at2"/>
<dbReference type="Proteomes" id="UP000001739">
    <property type="component" value="Chromosome 1"/>
</dbReference>
<dbReference type="GO" id="GO:0005737">
    <property type="term" value="C:cytoplasm"/>
    <property type="evidence" value="ECO:0007669"/>
    <property type="project" value="UniProtKB-UniRule"/>
</dbReference>
<dbReference type="GO" id="GO:0009295">
    <property type="term" value="C:nucleoid"/>
    <property type="evidence" value="ECO:0007669"/>
    <property type="project" value="UniProtKB-SubCell"/>
</dbReference>
<dbReference type="GO" id="GO:0003700">
    <property type="term" value="F:DNA-binding transcription factor activity"/>
    <property type="evidence" value="ECO:0007669"/>
    <property type="project" value="UniProtKB-UniRule"/>
</dbReference>
<dbReference type="GO" id="GO:0000976">
    <property type="term" value="F:transcription cis-regulatory region binding"/>
    <property type="evidence" value="ECO:0007669"/>
    <property type="project" value="TreeGrafter"/>
</dbReference>
<dbReference type="GO" id="GO:2000143">
    <property type="term" value="P:negative regulation of DNA-templated transcription initiation"/>
    <property type="evidence" value="ECO:0007669"/>
    <property type="project" value="TreeGrafter"/>
</dbReference>
<dbReference type="CDD" id="cd16321">
    <property type="entry name" value="MraZ_C"/>
    <property type="match status" value="1"/>
</dbReference>
<dbReference type="CDD" id="cd16320">
    <property type="entry name" value="MraZ_N"/>
    <property type="match status" value="1"/>
</dbReference>
<dbReference type="Gene3D" id="3.40.1550.20">
    <property type="entry name" value="Transcriptional regulator MraZ domain"/>
    <property type="match status" value="1"/>
</dbReference>
<dbReference type="HAMAP" id="MF_01008">
    <property type="entry name" value="MraZ"/>
    <property type="match status" value="1"/>
</dbReference>
<dbReference type="InterPro" id="IPR003444">
    <property type="entry name" value="MraZ"/>
</dbReference>
<dbReference type="InterPro" id="IPR035644">
    <property type="entry name" value="MraZ_C"/>
</dbReference>
<dbReference type="InterPro" id="IPR020603">
    <property type="entry name" value="MraZ_dom"/>
</dbReference>
<dbReference type="InterPro" id="IPR035642">
    <property type="entry name" value="MraZ_N"/>
</dbReference>
<dbReference type="InterPro" id="IPR038619">
    <property type="entry name" value="MraZ_sf"/>
</dbReference>
<dbReference type="InterPro" id="IPR007159">
    <property type="entry name" value="SpoVT-AbrB_dom"/>
</dbReference>
<dbReference type="InterPro" id="IPR037914">
    <property type="entry name" value="SpoVT-AbrB_sf"/>
</dbReference>
<dbReference type="NCBIfam" id="TIGR00242">
    <property type="entry name" value="division/cell wall cluster transcriptional repressor MraZ"/>
    <property type="match status" value="1"/>
</dbReference>
<dbReference type="PANTHER" id="PTHR34701">
    <property type="entry name" value="TRANSCRIPTIONAL REGULATOR MRAZ"/>
    <property type="match status" value="1"/>
</dbReference>
<dbReference type="PANTHER" id="PTHR34701:SF1">
    <property type="entry name" value="TRANSCRIPTIONAL REGULATOR MRAZ"/>
    <property type="match status" value="1"/>
</dbReference>
<dbReference type="Pfam" id="PF02381">
    <property type="entry name" value="MraZ"/>
    <property type="match status" value="2"/>
</dbReference>
<dbReference type="SUPFAM" id="SSF89447">
    <property type="entry name" value="AbrB/MazE/MraZ-like"/>
    <property type="match status" value="1"/>
</dbReference>
<dbReference type="PROSITE" id="PS51740">
    <property type="entry name" value="SPOVT_ABRB"/>
    <property type="match status" value="2"/>
</dbReference>
<accession>B2SYY4</accession>